<dbReference type="EC" id="2.1.2.11" evidence="1"/>
<dbReference type="EMBL" id="CP000822">
    <property type="protein sequence ID" value="ABV14312.1"/>
    <property type="molecule type" value="Genomic_DNA"/>
</dbReference>
<dbReference type="RefSeq" id="WP_012134017.1">
    <property type="nucleotide sequence ID" value="NC_009792.1"/>
</dbReference>
<dbReference type="SMR" id="A8ALE9"/>
<dbReference type="STRING" id="290338.CKO_03228"/>
<dbReference type="GeneID" id="45137008"/>
<dbReference type="KEGG" id="cko:CKO_03228"/>
<dbReference type="HOGENOM" id="CLU_036645_1_0_6"/>
<dbReference type="OrthoDB" id="9781789at2"/>
<dbReference type="UniPathway" id="UPA00028">
    <property type="reaction ID" value="UER00003"/>
</dbReference>
<dbReference type="Proteomes" id="UP000008148">
    <property type="component" value="Chromosome"/>
</dbReference>
<dbReference type="GO" id="GO:0005737">
    <property type="term" value="C:cytoplasm"/>
    <property type="evidence" value="ECO:0007669"/>
    <property type="project" value="UniProtKB-SubCell"/>
</dbReference>
<dbReference type="GO" id="GO:0003864">
    <property type="term" value="F:3-methyl-2-oxobutanoate hydroxymethyltransferase activity"/>
    <property type="evidence" value="ECO:0007669"/>
    <property type="project" value="UniProtKB-UniRule"/>
</dbReference>
<dbReference type="GO" id="GO:0000287">
    <property type="term" value="F:magnesium ion binding"/>
    <property type="evidence" value="ECO:0007669"/>
    <property type="project" value="TreeGrafter"/>
</dbReference>
<dbReference type="GO" id="GO:0015940">
    <property type="term" value="P:pantothenate biosynthetic process"/>
    <property type="evidence" value="ECO:0007669"/>
    <property type="project" value="UniProtKB-UniRule"/>
</dbReference>
<dbReference type="CDD" id="cd06557">
    <property type="entry name" value="KPHMT-like"/>
    <property type="match status" value="1"/>
</dbReference>
<dbReference type="FunFam" id="3.20.20.60:FF:000003">
    <property type="entry name" value="3-methyl-2-oxobutanoate hydroxymethyltransferase"/>
    <property type="match status" value="1"/>
</dbReference>
<dbReference type="Gene3D" id="3.20.20.60">
    <property type="entry name" value="Phosphoenolpyruvate-binding domains"/>
    <property type="match status" value="1"/>
</dbReference>
<dbReference type="HAMAP" id="MF_00156">
    <property type="entry name" value="PanB"/>
    <property type="match status" value="1"/>
</dbReference>
<dbReference type="InterPro" id="IPR003700">
    <property type="entry name" value="Pantoate_hydroxy_MeTrfase"/>
</dbReference>
<dbReference type="InterPro" id="IPR015813">
    <property type="entry name" value="Pyrv/PenolPyrv_kinase-like_dom"/>
</dbReference>
<dbReference type="InterPro" id="IPR040442">
    <property type="entry name" value="Pyrv_kinase-like_dom_sf"/>
</dbReference>
<dbReference type="NCBIfam" id="TIGR00222">
    <property type="entry name" value="panB"/>
    <property type="match status" value="1"/>
</dbReference>
<dbReference type="NCBIfam" id="NF001452">
    <property type="entry name" value="PRK00311.1"/>
    <property type="match status" value="1"/>
</dbReference>
<dbReference type="PANTHER" id="PTHR20881">
    <property type="entry name" value="3-METHYL-2-OXOBUTANOATE HYDROXYMETHYLTRANSFERASE"/>
    <property type="match status" value="1"/>
</dbReference>
<dbReference type="PANTHER" id="PTHR20881:SF0">
    <property type="entry name" value="3-METHYL-2-OXOBUTANOATE HYDROXYMETHYLTRANSFERASE"/>
    <property type="match status" value="1"/>
</dbReference>
<dbReference type="Pfam" id="PF02548">
    <property type="entry name" value="Pantoate_transf"/>
    <property type="match status" value="1"/>
</dbReference>
<dbReference type="PIRSF" id="PIRSF000388">
    <property type="entry name" value="Pantoate_hydroxy_MeTrfase"/>
    <property type="match status" value="1"/>
</dbReference>
<dbReference type="SUPFAM" id="SSF51621">
    <property type="entry name" value="Phosphoenolpyruvate/pyruvate domain"/>
    <property type="match status" value="1"/>
</dbReference>
<feature type="chain" id="PRO_1000011369" description="3-methyl-2-oxobutanoate hydroxymethyltransferase">
    <location>
        <begin position="1"/>
        <end position="263"/>
    </location>
</feature>
<feature type="active site" description="Proton acceptor" evidence="1">
    <location>
        <position position="180"/>
    </location>
</feature>
<feature type="binding site" evidence="1">
    <location>
        <begin position="45"/>
        <end position="46"/>
    </location>
    <ligand>
        <name>3-methyl-2-oxobutanoate</name>
        <dbReference type="ChEBI" id="CHEBI:11851"/>
    </ligand>
</feature>
<feature type="binding site" evidence="1">
    <location>
        <position position="45"/>
    </location>
    <ligand>
        <name>Mg(2+)</name>
        <dbReference type="ChEBI" id="CHEBI:18420"/>
    </ligand>
</feature>
<feature type="binding site" evidence="1">
    <location>
        <position position="84"/>
    </location>
    <ligand>
        <name>3-methyl-2-oxobutanoate</name>
        <dbReference type="ChEBI" id="CHEBI:11851"/>
    </ligand>
</feature>
<feature type="binding site" evidence="1">
    <location>
        <position position="84"/>
    </location>
    <ligand>
        <name>Mg(2+)</name>
        <dbReference type="ChEBI" id="CHEBI:18420"/>
    </ligand>
</feature>
<feature type="binding site" evidence="1">
    <location>
        <position position="112"/>
    </location>
    <ligand>
        <name>3-methyl-2-oxobutanoate</name>
        <dbReference type="ChEBI" id="CHEBI:11851"/>
    </ligand>
</feature>
<feature type="binding site" evidence="1">
    <location>
        <position position="114"/>
    </location>
    <ligand>
        <name>Mg(2+)</name>
        <dbReference type="ChEBI" id="CHEBI:18420"/>
    </ligand>
</feature>
<protein>
    <recommendedName>
        <fullName evidence="1">3-methyl-2-oxobutanoate hydroxymethyltransferase</fullName>
        <ecNumber evidence="1">2.1.2.11</ecNumber>
    </recommendedName>
    <alternativeName>
        <fullName evidence="1">Ketopantoate hydroxymethyltransferase</fullName>
        <shortName evidence="1">KPHMT</shortName>
    </alternativeName>
</protein>
<organism>
    <name type="scientific">Citrobacter koseri (strain ATCC BAA-895 / CDC 4225-83 / SGSC4696)</name>
    <dbReference type="NCBI Taxonomy" id="290338"/>
    <lineage>
        <taxon>Bacteria</taxon>
        <taxon>Pseudomonadati</taxon>
        <taxon>Pseudomonadota</taxon>
        <taxon>Gammaproteobacteria</taxon>
        <taxon>Enterobacterales</taxon>
        <taxon>Enterobacteriaceae</taxon>
        <taxon>Citrobacter</taxon>
    </lineage>
</organism>
<comment type="function">
    <text evidence="1">Catalyzes the reversible reaction in which hydroxymethyl group from 5,10-methylenetetrahydrofolate is transferred onto alpha-ketoisovalerate to form ketopantoate.</text>
</comment>
<comment type="catalytic activity">
    <reaction evidence="1">
        <text>3-methyl-2-oxobutanoate + (6R)-5,10-methylene-5,6,7,8-tetrahydrofolate + H2O = 2-dehydropantoate + (6S)-5,6,7,8-tetrahydrofolate</text>
        <dbReference type="Rhea" id="RHEA:11824"/>
        <dbReference type="ChEBI" id="CHEBI:11561"/>
        <dbReference type="ChEBI" id="CHEBI:11851"/>
        <dbReference type="ChEBI" id="CHEBI:15377"/>
        <dbReference type="ChEBI" id="CHEBI:15636"/>
        <dbReference type="ChEBI" id="CHEBI:57453"/>
        <dbReference type="EC" id="2.1.2.11"/>
    </reaction>
</comment>
<comment type="cofactor">
    <cofactor evidence="1">
        <name>Mg(2+)</name>
        <dbReference type="ChEBI" id="CHEBI:18420"/>
    </cofactor>
    <text evidence="1">Binds 1 Mg(2+) ion per subunit.</text>
</comment>
<comment type="pathway">
    <text evidence="1">Cofactor biosynthesis; (R)-pantothenate biosynthesis; (R)-pantoate from 3-methyl-2-oxobutanoate: step 1/2.</text>
</comment>
<comment type="subunit">
    <text evidence="1">Homodecamer; pentamer of dimers.</text>
</comment>
<comment type="subcellular location">
    <subcellularLocation>
        <location evidence="1">Cytoplasm</location>
    </subcellularLocation>
</comment>
<comment type="similarity">
    <text evidence="1">Belongs to the PanB family.</text>
</comment>
<keyword id="KW-0963">Cytoplasm</keyword>
<keyword id="KW-0460">Magnesium</keyword>
<keyword id="KW-0479">Metal-binding</keyword>
<keyword id="KW-0566">Pantothenate biosynthesis</keyword>
<keyword id="KW-1185">Reference proteome</keyword>
<keyword id="KW-0808">Transferase</keyword>
<proteinExistence type="inferred from homology"/>
<name>PANB_CITK8</name>
<gene>
    <name evidence="1" type="primary">panB</name>
    <name type="ordered locus">CKO_03228</name>
</gene>
<reference key="1">
    <citation type="submission" date="2007-08" db="EMBL/GenBank/DDBJ databases">
        <authorList>
            <consortium name="The Citrobacter koseri Genome Sequencing Project"/>
            <person name="McClelland M."/>
            <person name="Sanderson E.K."/>
            <person name="Porwollik S."/>
            <person name="Spieth J."/>
            <person name="Clifton W.S."/>
            <person name="Latreille P."/>
            <person name="Courtney L."/>
            <person name="Wang C."/>
            <person name="Pepin K."/>
            <person name="Bhonagiri V."/>
            <person name="Nash W."/>
            <person name="Johnson M."/>
            <person name="Thiruvilangam P."/>
            <person name="Wilson R."/>
        </authorList>
    </citation>
    <scope>NUCLEOTIDE SEQUENCE [LARGE SCALE GENOMIC DNA]</scope>
    <source>
        <strain>ATCC BAA-895 / CDC 4225-83 / SGSC4696</strain>
    </source>
</reference>
<sequence length="263" mass="28174">MKPTTIALLQKCKQEKKRFATITAYDYSFARLFADEGINVMLVGDSLGMTVQGHDSTLPVTVEDIAYHTRAVRRGAPNCLLLSDLPFMAYATPEQAFENAAVVMRAGANMVKIEGGAWLVDTVKMLTERAVPVCGHLGLTPQSVNIFGGYKIQGRGDAGQVLLDDALALEAAGAQLLVLECVPVELAKRVTEALSIPVIGIGAGNVTDGQILVMHDAFGITGGHIPKFAKNFLAEAGDMRAAVRQYIAEVESSVYPGEEHSFH</sequence>
<evidence type="ECO:0000255" key="1">
    <source>
        <dbReference type="HAMAP-Rule" id="MF_00156"/>
    </source>
</evidence>
<accession>A8ALE9</accession>